<organism>
    <name type="scientific">Arabidopsis thaliana</name>
    <name type="common">Mouse-ear cress</name>
    <dbReference type="NCBI Taxonomy" id="3702"/>
    <lineage>
        <taxon>Eukaryota</taxon>
        <taxon>Viridiplantae</taxon>
        <taxon>Streptophyta</taxon>
        <taxon>Embryophyta</taxon>
        <taxon>Tracheophyta</taxon>
        <taxon>Spermatophyta</taxon>
        <taxon>Magnoliopsida</taxon>
        <taxon>eudicotyledons</taxon>
        <taxon>Gunneridae</taxon>
        <taxon>Pentapetalae</taxon>
        <taxon>rosids</taxon>
        <taxon>malvids</taxon>
        <taxon>Brassicales</taxon>
        <taxon>Brassicaceae</taxon>
        <taxon>Camelineae</taxon>
        <taxon>Arabidopsis</taxon>
    </lineage>
</organism>
<accession>Q84LM4</accession>
<accession>O23313</accession>
<name>AARE_ARATH</name>
<keyword id="KW-0963">Cytoplasm</keyword>
<keyword id="KW-0378">Hydrolase</keyword>
<keyword id="KW-0539">Nucleus</keyword>
<keyword id="KW-1185">Reference proteome</keyword>
<protein>
    <recommendedName>
        <fullName evidence="6">Acylamino-acid-releasing enzyme</fullName>
        <shortName evidence="4">AARE</shortName>
        <ecNumber evidence="2">3.4.19.1</ecNumber>
    </recommendedName>
    <alternativeName>
        <fullName evidence="5">Oxidized protein hydrolase</fullName>
        <shortName evidence="5">OPH</shortName>
    </alternativeName>
</protein>
<reference key="1">
    <citation type="journal article" date="2003" name="J. Biochem.">
        <title>Identification and biochemical characterization of plant acylamino acid-releasing enzyme.</title>
        <authorList>
            <person name="Yamauchi Y."/>
            <person name="Ejiri Y."/>
            <person name="Toyoda Y."/>
            <person name="Tanaka K."/>
        </authorList>
    </citation>
    <scope>NUCLEOTIDE SEQUENCE [MRNA]</scope>
    <scope>FUNCTION</scope>
    <scope>CATALYTIC ACTIVITY</scope>
    <scope>ACTIVITY REGULATION</scope>
    <scope>BIOPHYSICOCHEMICAL PROPERTIES</scope>
    <scope>SUBUNIT</scope>
    <scope>ACTIVE SITES</scope>
    <scope>MUTAGENESIS OF SER-618; ASP-707 AND HIS-739</scope>
</reference>
<reference key="2">
    <citation type="journal article" date="1998" name="Nature">
        <title>Analysis of 1.9 Mb of contiguous sequence from chromosome 4 of Arabidopsis thaliana.</title>
        <authorList>
            <person name="Bevan M."/>
            <person name="Bancroft I."/>
            <person name="Bent E."/>
            <person name="Love K."/>
            <person name="Goodman H.M."/>
            <person name="Dean C."/>
            <person name="Bergkamp R."/>
            <person name="Dirkse W."/>
            <person name="van Staveren M."/>
            <person name="Stiekema W."/>
            <person name="Drost L."/>
            <person name="Ridley P."/>
            <person name="Hudson S.-A."/>
            <person name="Patel K."/>
            <person name="Murphy G."/>
            <person name="Piffanelli P."/>
            <person name="Wedler H."/>
            <person name="Wedler E."/>
            <person name="Wambutt R."/>
            <person name="Weitzenegger T."/>
            <person name="Pohl T."/>
            <person name="Terryn N."/>
            <person name="Gielen J."/>
            <person name="Villarroel R."/>
            <person name="De Clercq R."/>
            <person name="van Montagu M."/>
            <person name="Lecharny A."/>
            <person name="Aubourg S."/>
            <person name="Gy I."/>
            <person name="Kreis M."/>
            <person name="Lao N."/>
            <person name="Kavanagh T."/>
            <person name="Hempel S."/>
            <person name="Kotter P."/>
            <person name="Entian K.-D."/>
            <person name="Rieger M."/>
            <person name="Schaefer M."/>
            <person name="Funk B."/>
            <person name="Mueller-Auer S."/>
            <person name="Silvey M."/>
            <person name="James R."/>
            <person name="Monfort A."/>
            <person name="Pons A."/>
            <person name="Puigdomenech P."/>
            <person name="Douka A."/>
            <person name="Voukelatou E."/>
            <person name="Milioni D."/>
            <person name="Hatzopoulos P."/>
            <person name="Piravandi E."/>
            <person name="Obermaier B."/>
            <person name="Hilbert H."/>
            <person name="Duesterhoeft A."/>
            <person name="Moores T."/>
            <person name="Jones J.D.G."/>
            <person name="Eneva T."/>
            <person name="Palme K."/>
            <person name="Benes V."/>
            <person name="Rechmann S."/>
            <person name="Ansorge W."/>
            <person name="Cooke R."/>
            <person name="Berger C."/>
            <person name="Delseny M."/>
            <person name="Voet M."/>
            <person name="Volckaert G."/>
            <person name="Mewes H.-W."/>
            <person name="Klosterman S."/>
            <person name="Schueller C."/>
            <person name="Chalwatzis N."/>
        </authorList>
    </citation>
    <scope>NUCLEOTIDE SEQUENCE [LARGE SCALE GENOMIC DNA]</scope>
    <source>
        <strain>cv. Columbia</strain>
    </source>
</reference>
<reference key="3">
    <citation type="journal article" date="1999" name="Nature">
        <title>Sequence and analysis of chromosome 4 of the plant Arabidopsis thaliana.</title>
        <authorList>
            <person name="Mayer K.F.X."/>
            <person name="Schueller C."/>
            <person name="Wambutt R."/>
            <person name="Murphy G."/>
            <person name="Volckaert G."/>
            <person name="Pohl T."/>
            <person name="Duesterhoeft A."/>
            <person name="Stiekema W."/>
            <person name="Entian K.-D."/>
            <person name="Terryn N."/>
            <person name="Harris B."/>
            <person name="Ansorge W."/>
            <person name="Brandt P."/>
            <person name="Grivell L.A."/>
            <person name="Rieger M."/>
            <person name="Weichselgartner M."/>
            <person name="de Simone V."/>
            <person name="Obermaier B."/>
            <person name="Mache R."/>
            <person name="Mueller M."/>
            <person name="Kreis M."/>
            <person name="Delseny M."/>
            <person name="Puigdomenech P."/>
            <person name="Watson M."/>
            <person name="Schmidtheini T."/>
            <person name="Reichert B."/>
            <person name="Portetelle D."/>
            <person name="Perez-Alonso M."/>
            <person name="Boutry M."/>
            <person name="Bancroft I."/>
            <person name="Vos P."/>
            <person name="Hoheisel J."/>
            <person name="Zimmermann W."/>
            <person name="Wedler H."/>
            <person name="Ridley P."/>
            <person name="Langham S.-A."/>
            <person name="McCullagh B."/>
            <person name="Bilham L."/>
            <person name="Robben J."/>
            <person name="van der Schueren J."/>
            <person name="Grymonprez B."/>
            <person name="Chuang Y.-J."/>
            <person name="Vandenbussche F."/>
            <person name="Braeken M."/>
            <person name="Weltjens I."/>
            <person name="Voet M."/>
            <person name="Bastiaens I."/>
            <person name="Aert R."/>
            <person name="Defoor E."/>
            <person name="Weitzenegger T."/>
            <person name="Bothe G."/>
            <person name="Ramsperger U."/>
            <person name="Hilbert H."/>
            <person name="Braun M."/>
            <person name="Holzer E."/>
            <person name="Brandt A."/>
            <person name="Peters S."/>
            <person name="van Staveren M."/>
            <person name="Dirkse W."/>
            <person name="Mooijman P."/>
            <person name="Klein Lankhorst R."/>
            <person name="Rose M."/>
            <person name="Hauf J."/>
            <person name="Koetter P."/>
            <person name="Berneiser S."/>
            <person name="Hempel S."/>
            <person name="Feldpausch M."/>
            <person name="Lamberth S."/>
            <person name="Van den Daele H."/>
            <person name="De Keyser A."/>
            <person name="Buysshaert C."/>
            <person name="Gielen J."/>
            <person name="Villarroel R."/>
            <person name="De Clercq R."/>
            <person name="van Montagu M."/>
            <person name="Rogers J."/>
            <person name="Cronin A."/>
            <person name="Quail M.A."/>
            <person name="Bray-Allen S."/>
            <person name="Clark L."/>
            <person name="Doggett J."/>
            <person name="Hall S."/>
            <person name="Kay M."/>
            <person name="Lennard N."/>
            <person name="McLay K."/>
            <person name="Mayes R."/>
            <person name="Pettett A."/>
            <person name="Rajandream M.A."/>
            <person name="Lyne M."/>
            <person name="Benes V."/>
            <person name="Rechmann S."/>
            <person name="Borkova D."/>
            <person name="Bloecker H."/>
            <person name="Scharfe M."/>
            <person name="Grimm M."/>
            <person name="Loehnert T.-H."/>
            <person name="Dose S."/>
            <person name="de Haan M."/>
            <person name="Maarse A.C."/>
            <person name="Schaefer M."/>
            <person name="Mueller-Auer S."/>
            <person name="Gabel C."/>
            <person name="Fuchs M."/>
            <person name="Fartmann B."/>
            <person name="Granderath K."/>
            <person name="Dauner D."/>
            <person name="Herzl A."/>
            <person name="Neumann S."/>
            <person name="Argiriou A."/>
            <person name="Vitale D."/>
            <person name="Liguori R."/>
            <person name="Piravandi E."/>
            <person name="Massenet O."/>
            <person name="Quigley F."/>
            <person name="Clabauld G."/>
            <person name="Muendlein A."/>
            <person name="Felber R."/>
            <person name="Schnabl S."/>
            <person name="Hiller R."/>
            <person name="Schmidt W."/>
            <person name="Lecharny A."/>
            <person name="Aubourg S."/>
            <person name="Chefdor F."/>
            <person name="Cooke R."/>
            <person name="Berger C."/>
            <person name="Monfort A."/>
            <person name="Casacuberta E."/>
            <person name="Gibbons T."/>
            <person name="Weber N."/>
            <person name="Vandenbol M."/>
            <person name="Bargues M."/>
            <person name="Terol J."/>
            <person name="Torres A."/>
            <person name="Perez-Perez A."/>
            <person name="Purnelle B."/>
            <person name="Bent E."/>
            <person name="Johnson S."/>
            <person name="Tacon D."/>
            <person name="Jesse T."/>
            <person name="Heijnen L."/>
            <person name="Schwarz S."/>
            <person name="Scholler P."/>
            <person name="Heber S."/>
            <person name="Francs P."/>
            <person name="Bielke C."/>
            <person name="Frishman D."/>
            <person name="Haase D."/>
            <person name="Lemcke K."/>
            <person name="Mewes H.-W."/>
            <person name="Stocker S."/>
            <person name="Zaccaria P."/>
            <person name="Bevan M."/>
            <person name="Wilson R.K."/>
            <person name="de la Bastide M."/>
            <person name="Habermann K."/>
            <person name="Parnell L."/>
            <person name="Dedhia N."/>
            <person name="Gnoj L."/>
            <person name="Schutz K."/>
            <person name="Huang E."/>
            <person name="Spiegel L."/>
            <person name="Sekhon M."/>
            <person name="Murray J."/>
            <person name="Sheet P."/>
            <person name="Cordes M."/>
            <person name="Abu-Threideh J."/>
            <person name="Stoneking T."/>
            <person name="Kalicki J."/>
            <person name="Graves T."/>
            <person name="Harmon G."/>
            <person name="Edwards J."/>
            <person name="Latreille P."/>
            <person name="Courtney L."/>
            <person name="Cloud J."/>
            <person name="Abbott A."/>
            <person name="Scott K."/>
            <person name="Johnson D."/>
            <person name="Minx P."/>
            <person name="Bentley D."/>
            <person name="Fulton B."/>
            <person name="Miller N."/>
            <person name="Greco T."/>
            <person name="Kemp K."/>
            <person name="Kramer J."/>
            <person name="Fulton L."/>
            <person name="Mardis E."/>
            <person name="Dante M."/>
            <person name="Pepin K."/>
            <person name="Hillier L.W."/>
            <person name="Nelson J."/>
            <person name="Spieth J."/>
            <person name="Ryan E."/>
            <person name="Andrews S."/>
            <person name="Geisel C."/>
            <person name="Layman D."/>
            <person name="Du H."/>
            <person name="Ali J."/>
            <person name="Berghoff A."/>
            <person name="Jones K."/>
            <person name="Drone K."/>
            <person name="Cotton M."/>
            <person name="Joshu C."/>
            <person name="Antonoiu B."/>
            <person name="Zidanic M."/>
            <person name="Strong C."/>
            <person name="Sun H."/>
            <person name="Lamar B."/>
            <person name="Yordan C."/>
            <person name="Ma P."/>
            <person name="Zhong J."/>
            <person name="Preston R."/>
            <person name="Vil D."/>
            <person name="Shekher M."/>
            <person name="Matero A."/>
            <person name="Shah R."/>
            <person name="Swaby I.K."/>
            <person name="O'Shaughnessy A."/>
            <person name="Rodriguez M."/>
            <person name="Hoffman J."/>
            <person name="Till S."/>
            <person name="Granat S."/>
            <person name="Shohdy N."/>
            <person name="Hasegawa A."/>
            <person name="Hameed A."/>
            <person name="Lodhi M."/>
            <person name="Johnson A."/>
            <person name="Chen E."/>
            <person name="Marra M.A."/>
            <person name="Martienssen R."/>
            <person name="McCombie W.R."/>
        </authorList>
    </citation>
    <scope>NUCLEOTIDE SEQUENCE [LARGE SCALE GENOMIC DNA]</scope>
    <source>
        <strain>cv. Columbia</strain>
    </source>
</reference>
<reference key="4">
    <citation type="journal article" date="2017" name="Plant J.">
        <title>Araport11: a complete reannotation of the Arabidopsis thaliana reference genome.</title>
        <authorList>
            <person name="Cheng C.Y."/>
            <person name="Krishnakumar V."/>
            <person name="Chan A.P."/>
            <person name="Thibaud-Nissen F."/>
            <person name="Schobel S."/>
            <person name="Town C.D."/>
        </authorList>
    </citation>
    <scope>GENOME REANNOTATION</scope>
    <source>
        <strain>cv. Columbia</strain>
    </source>
</reference>
<reference key="5">
    <citation type="journal article" date="2012" name="Planta">
        <title>Role of acylamino acid-releasing enzyme/oxidized protein hydrolase in sustaining homeostasis of the cytoplasmic antioxidative system.</title>
        <authorList>
            <person name="Nakai A."/>
            <person name="Yamauchi Y."/>
            <person name="Sumi S."/>
            <person name="Tanaka K."/>
        </authorList>
    </citation>
    <scope>FUNCTION</scope>
    <scope>SUBCELLULAR LOCATION</scope>
</reference>
<evidence type="ECO:0000255" key="1">
    <source>
        <dbReference type="PROSITE-ProRule" id="PRU10084"/>
    </source>
</evidence>
<evidence type="ECO:0000269" key="2">
    <source>
    </source>
</evidence>
<evidence type="ECO:0000269" key="3">
    <source>
    </source>
</evidence>
<evidence type="ECO:0000303" key="4">
    <source>
    </source>
</evidence>
<evidence type="ECO:0000303" key="5">
    <source>
    </source>
</evidence>
<evidence type="ECO:0000305" key="6"/>
<evidence type="ECO:0000312" key="7">
    <source>
        <dbReference type="Araport" id="AT4G14570"/>
    </source>
</evidence>
<evidence type="ECO:0000312" key="8">
    <source>
        <dbReference type="EMBL" id="CAB10236.1"/>
    </source>
</evidence>
<sequence length="764" mass="83938">MDSSGTDSAKELHVGLDPTTEEEYATQSKLLQEFINIPSIDKAWIFNSDSGSQAMFALSQANLLANKKKKFMLSGHISNESNQSVNFHWAPFPIEMTGASAFVPSPSGLKLLVIRNPENESPTKFEIWNSSQLEKEFHIPQKVHGSVYVDGWFEGISWDSDETHVAYVAEEPSRPKPTFDHLGYYKKENSLDKGIGSWKGEGDWEEEWGEAYAGKRQPALFVINVDSGEVEPIKGIPRSISVGQVVWSPNSNGSAQYLVFAGWLGDKRKFGIKYCYNRPCAIYAIKFTSDEPKDDDANEFPIHNLTKSISSGFCPRFSKDGKFLVFVSAKTAVDSGAHWATESLHRIDWPSDGKLPESTNIVDVIQVVNCPKDGCFPGLYVTGLLSDPWLSDGHSLMLSTYWRSCRVILSVNLLSGEVSRASPSDSDYSWNALALDGDSIVAVSSSPVSVPEIKYGKKGLDSAGKPSWLWSNIQSPIRYSEKVMAGLSSLQFKILKVPISDVSEGLAEGAKNPIEAIYVSSSKSKENGKCDPLIAVLHGGPHSVSPCSFSRTMAYLSSIGYSQLIINYRGSLGYGEDALQSLPGKVGSQDVKDCLLAVDHAIEMGIADPSRITVLGGSHGGFLTTHLIGQAPDKFVAAAARNPVCNMASMVGITDIPDWCFFEAYGDQSHYTEAPSAEDLSRFHQMSPISHISKVKTPTLFLLGTKDLRVPISNGFQYVRALKEKGVEVKVLVFPNDNHPLDRPQTDYESFLNIAVWFNKYCKL</sequence>
<gene>
    <name evidence="4" type="primary">AARE</name>
    <name evidence="7" type="ordered locus">At4g14570</name>
    <name evidence="8" type="ORF">dl3325w</name>
</gene>
<feature type="chain" id="PRO_0000435685" description="Acylamino-acid-releasing enzyme">
    <location>
        <begin position="1"/>
        <end position="764"/>
    </location>
</feature>
<feature type="active site" description="Charge relay system" evidence="1 2">
    <location>
        <position position="618"/>
    </location>
</feature>
<feature type="active site" description="Charge relay system" evidence="1 2">
    <location>
        <position position="707"/>
    </location>
</feature>
<feature type="active site" description="Charge relay system" evidence="1 2">
    <location>
        <position position="739"/>
    </location>
</feature>
<feature type="mutagenesis site" description="Loss of catalytic activity." evidence="2">
    <original>S</original>
    <variation>A</variation>
    <location>
        <position position="618"/>
    </location>
</feature>
<feature type="mutagenesis site" description="Loss of catalytic activity." evidence="2">
    <original>D</original>
    <variation>N</variation>
    <location>
        <position position="707"/>
    </location>
</feature>
<feature type="mutagenesis site" description="Loss of catalytic activity." evidence="2">
    <original>H</original>
    <variation>A</variation>
    <location>
        <position position="739"/>
    </location>
</feature>
<comment type="function">
    <text evidence="2 3">Catalyzes the hydrolysis of the N-terminal peptide bond of an N-acetylated peptide to generate an N-acetylated amino acid and a peptide with a free N-terminus. Can degrade the glycated RuBisCO (ribulose-1,5-bisphosphate carboxylase/oxygenase) protein but not the native protein. May be involved in the elimination of glycated proteins (PubMed:12966075). Plays a homeostatic role in sustaining the cytoplasmic antioxidative system. May contribute to the elimination of the oxidized proteins in the cytoplasm (PubMed:22398639).</text>
</comment>
<comment type="catalytic activity">
    <reaction evidence="2">
        <text>Cleavage of an N-acetyl or N-formyl amino acid from the N-terminus of a polypeptide.</text>
        <dbReference type="EC" id="3.4.19.1"/>
    </reaction>
</comment>
<comment type="activity regulation">
    <text evidence="2">Strongly inhibited by the serine protease inhibitor diisopropyl fluorophosphate.</text>
</comment>
<comment type="biophysicochemical properties">
    <kinetics>
        <KM evidence="2">1.5 mM for Ac-Ala-pNA</KM>
    </kinetics>
    <phDependence>
        <text evidence="2">Optimum pH is 7.0.</text>
    </phDependence>
</comment>
<comment type="subunit">
    <text evidence="2">Homotetramer.</text>
</comment>
<comment type="subcellular location">
    <subcellularLocation>
        <location evidence="3">Cytoplasm</location>
    </subcellularLocation>
    <subcellularLocation>
        <location evidence="3">Nucleus</location>
    </subcellularLocation>
</comment>
<comment type="miscellaneous">
    <text evidence="3">Plants silencing AARE show enhanced ion leakage after oxidative treatment.</text>
</comment>
<comment type="similarity">
    <text evidence="6">Belongs to the peptidase S9C family.</text>
</comment>
<comment type="sequence caution" evidence="6">
    <conflict type="erroneous gene model prediction">
        <sequence resource="EMBL-CDS" id="CAB10236"/>
    </conflict>
</comment>
<comment type="sequence caution" evidence="6">
    <conflict type="erroneous gene model prediction">
        <sequence resource="EMBL-CDS" id="CAB78499"/>
    </conflict>
</comment>
<proteinExistence type="evidence at protein level"/>
<dbReference type="EC" id="3.4.19.1" evidence="2"/>
<dbReference type="EMBL" id="AB109759">
    <property type="protein sequence ID" value="BAC76411.1"/>
    <property type="molecule type" value="mRNA"/>
</dbReference>
<dbReference type="EMBL" id="Z97336">
    <property type="protein sequence ID" value="CAB10236.1"/>
    <property type="status" value="ALT_SEQ"/>
    <property type="molecule type" value="Genomic_DNA"/>
</dbReference>
<dbReference type="EMBL" id="AL161539">
    <property type="protein sequence ID" value="CAB78499.1"/>
    <property type="status" value="ALT_SEQ"/>
    <property type="molecule type" value="Genomic_DNA"/>
</dbReference>
<dbReference type="EMBL" id="CP002687">
    <property type="status" value="NOT_ANNOTATED_CDS"/>
    <property type="molecule type" value="Genomic_DNA"/>
</dbReference>
<dbReference type="PIR" id="B71408">
    <property type="entry name" value="B71408"/>
</dbReference>
<dbReference type="SMR" id="Q84LM4"/>
<dbReference type="FunCoup" id="Q84LM4">
    <property type="interactions" value="2359"/>
</dbReference>
<dbReference type="STRING" id="3702.Q84LM4"/>
<dbReference type="ESTHER" id="arath-AARE">
    <property type="family name" value="ACPH_Peptidase_S9"/>
</dbReference>
<dbReference type="PaxDb" id="3702-AT4G14570.1"/>
<dbReference type="ProMEX" id="Q84LM4"/>
<dbReference type="ProteomicsDB" id="244579"/>
<dbReference type="Araport" id="AT4G14570"/>
<dbReference type="TAIR" id="AT4G14570">
    <property type="gene designation" value="AARE"/>
</dbReference>
<dbReference type="eggNOG" id="KOG2100">
    <property type="taxonomic scope" value="Eukaryota"/>
</dbReference>
<dbReference type="HOGENOM" id="CLU_014230_1_1_1"/>
<dbReference type="InParanoid" id="Q84LM4"/>
<dbReference type="PhylomeDB" id="Q84LM4"/>
<dbReference type="BRENDA" id="3.4.19.1">
    <property type="organism ID" value="399"/>
</dbReference>
<dbReference type="PRO" id="PR:Q84LM4"/>
<dbReference type="Proteomes" id="UP000006548">
    <property type="component" value="Chromosome 4"/>
</dbReference>
<dbReference type="ExpressionAtlas" id="Q84LM4">
    <property type="expression patterns" value="baseline and differential"/>
</dbReference>
<dbReference type="GO" id="GO:0009507">
    <property type="term" value="C:chloroplast"/>
    <property type="evidence" value="ECO:0007005"/>
    <property type="project" value="TAIR"/>
</dbReference>
<dbReference type="GO" id="GO:0005737">
    <property type="term" value="C:cytoplasm"/>
    <property type="evidence" value="ECO:0000314"/>
    <property type="project" value="TAIR"/>
</dbReference>
<dbReference type="GO" id="GO:0005829">
    <property type="term" value="C:cytosol"/>
    <property type="evidence" value="ECO:0007005"/>
    <property type="project" value="TAIR"/>
</dbReference>
<dbReference type="GO" id="GO:0005634">
    <property type="term" value="C:nucleus"/>
    <property type="evidence" value="ECO:0000314"/>
    <property type="project" value="TAIR"/>
</dbReference>
<dbReference type="GO" id="GO:0005773">
    <property type="term" value="C:vacuole"/>
    <property type="evidence" value="ECO:0007005"/>
    <property type="project" value="TAIR"/>
</dbReference>
<dbReference type="GO" id="GO:0008242">
    <property type="term" value="F:omega peptidase activity"/>
    <property type="evidence" value="ECO:0007669"/>
    <property type="project" value="UniProtKB-EC"/>
</dbReference>
<dbReference type="GO" id="GO:0070009">
    <property type="term" value="F:serine-type aminopeptidase activity"/>
    <property type="evidence" value="ECO:0000314"/>
    <property type="project" value="TAIR"/>
</dbReference>
<dbReference type="GO" id="GO:0004252">
    <property type="term" value="F:serine-type endopeptidase activity"/>
    <property type="evidence" value="ECO:0000318"/>
    <property type="project" value="GO_Central"/>
</dbReference>
<dbReference type="GO" id="GO:0051289">
    <property type="term" value="P:protein homotetramerization"/>
    <property type="evidence" value="ECO:0000353"/>
    <property type="project" value="UniProtKB"/>
</dbReference>
<dbReference type="GO" id="GO:0006508">
    <property type="term" value="P:proteolysis"/>
    <property type="evidence" value="ECO:0000314"/>
    <property type="project" value="TAIR"/>
</dbReference>
<dbReference type="FunFam" id="3.40.50.1820:FF:000146">
    <property type="entry name" value="Acylamino-acid-releasing enzyme"/>
    <property type="match status" value="1"/>
</dbReference>
<dbReference type="Gene3D" id="3.40.50.1820">
    <property type="entry name" value="alpha/beta hydrolase"/>
    <property type="match status" value="1"/>
</dbReference>
<dbReference type="Gene3D" id="2.120.10.30">
    <property type="entry name" value="TolB, C-terminal domain"/>
    <property type="match status" value="1"/>
</dbReference>
<dbReference type="InterPro" id="IPR011042">
    <property type="entry name" value="6-blade_b-propeller_TolB-like"/>
</dbReference>
<dbReference type="InterPro" id="IPR045550">
    <property type="entry name" value="AARE_N"/>
</dbReference>
<dbReference type="InterPro" id="IPR029058">
    <property type="entry name" value="AB_hydrolase_fold"/>
</dbReference>
<dbReference type="InterPro" id="IPR001375">
    <property type="entry name" value="Peptidase_S9_cat"/>
</dbReference>
<dbReference type="PANTHER" id="PTHR42776:SF4">
    <property type="entry name" value="ACYLAMINO-ACID-RELEASING ENZYME"/>
    <property type="match status" value="1"/>
</dbReference>
<dbReference type="PANTHER" id="PTHR42776">
    <property type="entry name" value="SERINE PEPTIDASE S9 FAMILY MEMBER"/>
    <property type="match status" value="1"/>
</dbReference>
<dbReference type="Pfam" id="PF19283">
    <property type="entry name" value="APEH_N"/>
    <property type="match status" value="1"/>
</dbReference>
<dbReference type="Pfam" id="PF00326">
    <property type="entry name" value="Peptidase_S9"/>
    <property type="match status" value="1"/>
</dbReference>
<dbReference type="SUPFAM" id="SSF53474">
    <property type="entry name" value="alpha/beta-Hydrolases"/>
    <property type="match status" value="1"/>
</dbReference>
<dbReference type="SUPFAM" id="SSF82171">
    <property type="entry name" value="DPP6 N-terminal domain-like"/>
    <property type="match status" value="1"/>
</dbReference>